<proteinExistence type="inferred from homology"/>
<dbReference type="EC" id="2.1.1.170" evidence="1"/>
<dbReference type="EMBL" id="AM747720">
    <property type="protein sequence ID" value="CAR50331.1"/>
    <property type="molecule type" value="Genomic_DNA"/>
</dbReference>
<dbReference type="RefSeq" id="WP_012492241.1">
    <property type="nucleotide sequence ID" value="NC_011000.1"/>
</dbReference>
<dbReference type="SMR" id="B4E582"/>
<dbReference type="GeneID" id="56556583"/>
<dbReference type="KEGG" id="bcj:BCAL0025"/>
<dbReference type="eggNOG" id="COG0357">
    <property type="taxonomic scope" value="Bacteria"/>
</dbReference>
<dbReference type="HOGENOM" id="CLU_065341_2_0_4"/>
<dbReference type="BioCyc" id="BCEN216591:G1G1V-27-MONOMER"/>
<dbReference type="Proteomes" id="UP000001035">
    <property type="component" value="Chromosome 1"/>
</dbReference>
<dbReference type="GO" id="GO:0005829">
    <property type="term" value="C:cytosol"/>
    <property type="evidence" value="ECO:0007669"/>
    <property type="project" value="TreeGrafter"/>
</dbReference>
<dbReference type="GO" id="GO:0070043">
    <property type="term" value="F:rRNA (guanine-N7-)-methyltransferase activity"/>
    <property type="evidence" value="ECO:0007669"/>
    <property type="project" value="UniProtKB-UniRule"/>
</dbReference>
<dbReference type="CDD" id="cd02440">
    <property type="entry name" value="AdoMet_MTases"/>
    <property type="match status" value="1"/>
</dbReference>
<dbReference type="Gene3D" id="3.40.50.150">
    <property type="entry name" value="Vaccinia Virus protein VP39"/>
    <property type="match status" value="1"/>
</dbReference>
<dbReference type="HAMAP" id="MF_00074">
    <property type="entry name" value="16SrRNA_methyltr_G"/>
    <property type="match status" value="1"/>
</dbReference>
<dbReference type="InterPro" id="IPR003682">
    <property type="entry name" value="rRNA_ssu_MeTfrase_G"/>
</dbReference>
<dbReference type="InterPro" id="IPR029063">
    <property type="entry name" value="SAM-dependent_MTases_sf"/>
</dbReference>
<dbReference type="NCBIfam" id="TIGR00138">
    <property type="entry name" value="rsmG_gidB"/>
    <property type="match status" value="1"/>
</dbReference>
<dbReference type="PANTHER" id="PTHR31760">
    <property type="entry name" value="S-ADENOSYL-L-METHIONINE-DEPENDENT METHYLTRANSFERASES SUPERFAMILY PROTEIN"/>
    <property type="match status" value="1"/>
</dbReference>
<dbReference type="PANTHER" id="PTHR31760:SF0">
    <property type="entry name" value="S-ADENOSYL-L-METHIONINE-DEPENDENT METHYLTRANSFERASES SUPERFAMILY PROTEIN"/>
    <property type="match status" value="1"/>
</dbReference>
<dbReference type="Pfam" id="PF02527">
    <property type="entry name" value="GidB"/>
    <property type="match status" value="1"/>
</dbReference>
<dbReference type="PIRSF" id="PIRSF003078">
    <property type="entry name" value="GidB"/>
    <property type="match status" value="1"/>
</dbReference>
<dbReference type="SUPFAM" id="SSF53335">
    <property type="entry name" value="S-adenosyl-L-methionine-dependent methyltransferases"/>
    <property type="match status" value="1"/>
</dbReference>
<reference key="1">
    <citation type="journal article" date="2009" name="J. Bacteriol.">
        <title>The genome of Burkholderia cenocepacia J2315, an epidemic pathogen of cystic fibrosis patients.</title>
        <authorList>
            <person name="Holden M.T."/>
            <person name="Seth-Smith H.M."/>
            <person name="Crossman L.C."/>
            <person name="Sebaihia M."/>
            <person name="Bentley S.D."/>
            <person name="Cerdeno-Tarraga A.M."/>
            <person name="Thomson N.R."/>
            <person name="Bason N."/>
            <person name="Quail M.A."/>
            <person name="Sharp S."/>
            <person name="Cherevach I."/>
            <person name="Churcher C."/>
            <person name="Goodhead I."/>
            <person name="Hauser H."/>
            <person name="Holroyd N."/>
            <person name="Mungall K."/>
            <person name="Scott P."/>
            <person name="Walker D."/>
            <person name="White B."/>
            <person name="Rose H."/>
            <person name="Iversen P."/>
            <person name="Mil-Homens D."/>
            <person name="Rocha E.P."/>
            <person name="Fialho A.M."/>
            <person name="Baldwin A."/>
            <person name="Dowson C."/>
            <person name="Barrell B.G."/>
            <person name="Govan J.R."/>
            <person name="Vandamme P."/>
            <person name="Hart C.A."/>
            <person name="Mahenthiralingam E."/>
            <person name="Parkhill J."/>
        </authorList>
    </citation>
    <scope>NUCLEOTIDE SEQUENCE [LARGE SCALE GENOMIC DNA]</scope>
    <source>
        <strain>ATCC BAA-245 / DSM 16553 / LMG 16656 / NCTC 13227 / J2315 / CF5610</strain>
    </source>
</reference>
<feature type="chain" id="PRO_1000092617" description="Ribosomal RNA small subunit methyltransferase G">
    <location>
        <begin position="1"/>
        <end position="228"/>
    </location>
</feature>
<feature type="binding site" evidence="1">
    <location>
        <position position="89"/>
    </location>
    <ligand>
        <name>S-adenosyl-L-methionine</name>
        <dbReference type="ChEBI" id="CHEBI:59789"/>
    </ligand>
</feature>
<feature type="binding site" evidence="1">
    <location>
        <position position="94"/>
    </location>
    <ligand>
        <name>S-adenosyl-L-methionine</name>
        <dbReference type="ChEBI" id="CHEBI:59789"/>
    </ligand>
</feature>
<feature type="binding site" evidence="1">
    <location>
        <begin position="140"/>
        <end position="141"/>
    </location>
    <ligand>
        <name>S-adenosyl-L-methionine</name>
        <dbReference type="ChEBI" id="CHEBI:59789"/>
    </ligand>
</feature>
<feature type="binding site" evidence="1">
    <location>
        <position position="159"/>
    </location>
    <ligand>
        <name>S-adenosyl-L-methionine</name>
        <dbReference type="ChEBI" id="CHEBI:59789"/>
    </ligand>
</feature>
<evidence type="ECO:0000255" key="1">
    <source>
        <dbReference type="HAMAP-Rule" id="MF_00074"/>
    </source>
</evidence>
<organism>
    <name type="scientific">Burkholderia cenocepacia (strain ATCC BAA-245 / DSM 16553 / LMG 16656 / NCTC 13227 / J2315 / CF5610)</name>
    <name type="common">Burkholderia cepacia (strain J2315)</name>
    <dbReference type="NCBI Taxonomy" id="216591"/>
    <lineage>
        <taxon>Bacteria</taxon>
        <taxon>Pseudomonadati</taxon>
        <taxon>Pseudomonadota</taxon>
        <taxon>Betaproteobacteria</taxon>
        <taxon>Burkholderiales</taxon>
        <taxon>Burkholderiaceae</taxon>
        <taxon>Burkholderia</taxon>
        <taxon>Burkholderia cepacia complex</taxon>
    </lineage>
</organism>
<keyword id="KW-0963">Cytoplasm</keyword>
<keyword id="KW-0489">Methyltransferase</keyword>
<keyword id="KW-0698">rRNA processing</keyword>
<keyword id="KW-0949">S-adenosyl-L-methionine</keyword>
<keyword id="KW-0808">Transferase</keyword>
<name>RSMG_BURCJ</name>
<protein>
    <recommendedName>
        <fullName evidence="1">Ribosomal RNA small subunit methyltransferase G</fullName>
        <ecNumber evidence="1">2.1.1.170</ecNumber>
    </recommendedName>
    <alternativeName>
        <fullName evidence="1">16S rRNA 7-methylguanosine methyltransferase</fullName>
        <shortName evidence="1">16S rRNA m7G methyltransferase</shortName>
    </alternativeName>
</protein>
<accession>B4E582</accession>
<comment type="function">
    <text evidence="1">Specifically methylates the N7 position of guanine in position 527 of 16S rRNA.</text>
</comment>
<comment type="catalytic activity">
    <reaction evidence="1">
        <text>guanosine(527) in 16S rRNA + S-adenosyl-L-methionine = N(7)-methylguanosine(527) in 16S rRNA + S-adenosyl-L-homocysteine</text>
        <dbReference type="Rhea" id="RHEA:42732"/>
        <dbReference type="Rhea" id="RHEA-COMP:10209"/>
        <dbReference type="Rhea" id="RHEA-COMP:10210"/>
        <dbReference type="ChEBI" id="CHEBI:57856"/>
        <dbReference type="ChEBI" id="CHEBI:59789"/>
        <dbReference type="ChEBI" id="CHEBI:74269"/>
        <dbReference type="ChEBI" id="CHEBI:74480"/>
        <dbReference type="EC" id="2.1.1.170"/>
    </reaction>
</comment>
<comment type="subcellular location">
    <subcellularLocation>
        <location evidence="1">Cytoplasm</location>
    </subcellularLocation>
</comment>
<comment type="similarity">
    <text evidence="1">Belongs to the methyltransferase superfamily. RNA methyltransferase RsmG family.</text>
</comment>
<sequence length="228" mass="24978">MTARRAPAVNRDVLEQMLVEGTAALDLTLTDAQRNQLLDYVALLGKWNAVYNLTAIRDPKQMLIQHILDSLSIVPHLRGRTSARVLDVGSGGGLPGIVLAIVEPGWQVTLNDIVQKKSAFQTQMRAELKLVNLSVVTGRVESLQPGVEVPEKFDMIVSRAFADLSDFVKLARHLVAPGGSIWAMKGVHPDDEIARLPEGSHVKQTIRLAVPMLDAERHLFEVAVDDAN</sequence>
<gene>
    <name evidence="1" type="primary">rsmG</name>
    <name type="ordered locus">BceJ2315_00250</name>
    <name type="ORF">BCAL0025</name>
</gene>